<feature type="chain" id="PRO_0000305108" description="Delta-actitoxin-Aspp1a">
    <location>
        <begin position="1"/>
        <end position="47"/>
    </location>
</feature>
<feature type="disulfide bond" evidence="2">
    <location>
        <begin position="4"/>
        <end position="44"/>
    </location>
</feature>
<feature type="disulfide bond" evidence="2">
    <location>
        <begin position="6"/>
        <end position="34"/>
    </location>
</feature>
<feature type="disulfide bond" evidence="2">
    <location>
        <begin position="27"/>
        <end position="45"/>
    </location>
</feature>
<sequence>GVPCLCDSDGPSVRGNTLSGTLWLAGCPSGWHNCKAHGPTIGWCCKK</sequence>
<dbReference type="SMR" id="P0C5F4"/>
<dbReference type="GO" id="GO:0005576">
    <property type="term" value="C:extracellular region"/>
    <property type="evidence" value="ECO:0007669"/>
    <property type="project" value="UniProtKB-SubCell"/>
</dbReference>
<dbReference type="GO" id="GO:0042151">
    <property type="term" value="C:nematocyst"/>
    <property type="evidence" value="ECO:0007669"/>
    <property type="project" value="UniProtKB-SubCell"/>
</dbReference>
<dbReference type="GO" id="GO:0017080">
    <property type="term" value="F:sodium channel regulator activity"/>
    <property type="evidence" value="ECO:0007669"/>
    <property type="project" value="UniProtKB-KW"/>
</dbReference>
<dbReference type="GO" id="GO:0090729">
    <property type="term" value="F:toxin activity"/>
    <property type="evidence" value="ECO:0007669"/>
    <property type="project" value="UniProtKB-KW"/>
</dbReference>
<dbReference type="GO" id="GO:0009966">
    <property type="term" value="P:regulation of signal transduction"/>
    <property type="evidence" value="ECO:0007669"/>
    <property type="project" value="InterPro"/>
</dbReference>
<dbReference type="Gene3D" id="2.20.20.10">
    <property type="entry name" value="Anthopleurin-A"/>
    <property type="match status" value="1"/>
</dbReference>
<dbReference type="InterPro" id="IPR000693">
    <property type="entry name" value="Anenome_toxin"/>
</dbReference>
<dbReference type="InterPro" id="IPR023355">
    <property type="entry name" value="Myo_ane_neurotoxin_sf"/>
</dbReference>
<dbReference type="Pfam" id="PF00706">
    <property type="entry name" value="Toxin_4"/>
    <property type="match status" value="1"/>
</dbReference>
<dbReference type="PIRSF" id="PIRSF001905">
    <property type="entry name" value="Anenome_toxin"/>
    <property type="match status" value="1"/>
</dbReference>
<dbReference type="SUPFAM" id="SSF57392">
    <property type="entry name" value="Defensin-like"/>
    <property type="match status" value="1"/>
</dbReference>
<evidence type="ECO:0000250" key="1"/>
<evidence type="ECO:0000250" key="2">
    <source>
        <dbReference type="UniProtKB" id="P01530"/>
    </source>
</evidence>
<evidence type="ECO:0000269" key="3">
    <source>
    </source>
</evidence>
<evidence type="ECO:0000269" key="4">
    <source>
    </source>
</evidence>
<evidence type="ECO:0000303" key="5">
    <source>
    </source>
</evidence>
<evidence type="ECO:0000303" key="6">
    <source>
    </source>
</evidence>
<evidence type="ECO:0000305" key="7"/>
<accession>P0C5F4</accession>
<keyword id="KW-0123">Cardiotoxin</keyword>
<keyword id="KW-1015">Disulfide bond</keyword>
<keyword id="KW-0872">Ion channel impairing toxin</keyword>
<keyword id="KW-0166">Nematocyst</keyword>
<keyword id="KW-0528">Neurotoxin</keyword>
<keyword id="KW-0964">Secreted</keyword>
<keyword id="KW-0800">Toxin</keyword>
<keyword id="KW-0738">Voltage-gated sodium channel impairing toxin</keyword>
<comment type="function">
    <text evidence="1 3 4">Binds specifically to voltage-gated sodium channels (Nav) (site 3), thereby delaying their inactivation during signal transduction (By similarity). Has a heart stimulation effect on isolated rat atria that is higher than that of Hk7a, Hk8a and Hk16a (PubMed:12782079, PubMed:14672713).</text>
</comment>
<comment type="subcellular location">
    <subcellularLocation>
        <location evidence="7">Secreted</location>
    </subcellularLocation>
    <subcellularLocation>
        <location evidence="7">Nematocyst</location>
    </subcellularLocation>
</comment>
<comment type="toxic dose">
    <text evidence="3">LD(50) is 1.4 mg/kg when intraperitoneally injected into mice.</text>
</comment>
<comment type="similarity">
    <text evidence="7">Belongs to the sea anemone sodium channel inhibitory toxin family. Type I subfamily.</text>
</comment>
<name>NA12A_ANTS7</name>
<organism>
    <name type="scientific">Anthopleura sp. (strain 'Zhanjiang')</name>
    <name type="common">Sea anemone</name>
    <dbReference type="NCBI Taxonomy" id="462333"/>
    <lineage>
        <taxon>Eukaryota</taxon>
        <taxon>Metazoa</taxon>
        <taxon>Cnidaria</taxon>
        <taxon>Anthozoa</taxon>
        <taxon>Hexacorallia</taxon>
        <taxon>Actiniaria</taxon>
        <taxon>Actiniidae</taxon>
        <taxon>Anthopleura</taxon>
    </lineage>
</organism>
<protein>
    <recommendedName>
        <fullName evidence="6">Delta-actitoxin-Aspp1a</fullName>
        <shortName evidence="6">Delta-AITX-Aspp1a</shortName>
    </recommendedName>
    <alternativeName>
        <fullName evidence="5">Toxin Hk2a</fullName>
    </alternativeName>
</protein>
<proteinExistence type="evidence at transcript level"/>
<reference key="1">
    <citation type="journal article" date="2003" name="Toxicon">
        <title>Cloning and characterization of a novel neurotoxin from the sea anemone Anthopleura sp.</title>
        <authorList>
            <person name="Liu W.H."/>
            <person name="Wang L."/>
            <person name="Wang Y.L."/>
            <person name="Peng L.S."/>
            <person name="Wu W.Y."/>
            <person name="Peng W.L."/>
            <person name="Jiang X.Y."/>
            <person name="Tu H.B."/>
            <person name="Chen H.P."/>
            <person name="Ou-Yang P."/>
            <person name="Xu A.L."/>
        </authorList>
    </citation>
    <scope>NUCLEOTIDE SEQUENCE [MRNA]</scope>
    <scope>TOXIC DOSE</scope>
    <scope>FUNCTION</scope>
    <source>
        <tissue>Tentacle</tissue>
    </source>
</reference>
<reference key="2">
    <citation type="journal article" date="2004" name="Biochem. Biophys. Res. Commun.">
        <title>Functional expression and characterization of four novel neurotoxins from sea anemone Anthopleura sp.</title>
        <authorList>
            <person name="Wang L."/>
            <person name="Ou J."/>
            <person name="Peng L."/>
            <person name="Zhong X."/>
            <person name="Du J."/>
            <person name="Liu Y."/>
            <person name="Huang Y."/>
            <person name="Liu W."/>
            <person name="Zhang Y."/>
            <person name="Dong M."/>
            <person name="Xu A.-L."/>
        </authorList>
    </citation>
    <scope>NUCLEOTIDE SEQUENCE [MRNA]</scope>
    <scope>FUNCTION</scope>
    <source>
        <tissue>Tentacle</tissue>
    </source>
</reference>
<reference key="3">
    <citation type="journal article" date="2012" name="Toxicon">
        <title>Development of a rational nomenclature for naming peptide and protein toxins from sea anemones.</title>
        <authorList>
            <person name="Oliveira J.S."/>
            <person name="Fuentes-Silva D."/>
            <person name="King G.F."/>
        </authorList>
    </citation>
    <scope>NOMENCLATURE</scope>
</reference>